<dbReference type="EMBL" id="X07234">
    <property type="protein sequence ID" value="CAA30212.1"/>
    <property type="molecule type" value="Genomic_DNA"/>
</dbReference>
<dbReference type="PIR" id="S03213">
    <property type="entry name" value="S03213"/>
</dbReference>
<dbReference type="RefSeq" id="NP_039779.1">
    <property type="nucleotide sequence ID" value="NC_001338.1"/>
</dbReference>
<dbReference type="SMR" id="P20218"/>
<dbReference type="KEGG" id="vg:2559647"/>
<dbReference type="Proteomes" id="UP000000854">
    <property type="component" value="Genome"/>
</dbReference>
<sequence>MARIQGGQMSPSNVSNTTFLVLPVWILCRLLSIQRVLTAKINGLPMLISPFWQP</sequence>
<gene>
    <name type="ORF">e54</name>
</gene>
<protein>
    <recommendedName>
        <fullName>Uncharacterized protein E-54</fullName>
    </recommendedName>
</protein>
<organismHost>
    <name type="scientific">Saccharolobus solfataricus</name>
    <name type="common">Sulfolobus solfataricus</name>
    <dbReference type="NCBI Taxonomy" id="2287"/>
</organismHost>
<name>E54_SSV1</name>
<keyword id="KW-1185">Reference proteome</keyword>
<feature type="chain" id="PRO_0000223030" description="Uncharacterized protein E-54">
    <location>
        <begin position="1"/>
        <end position="54"/>
    </location>
</feature>
<proteinExistence type="predicted"/>
<organism>
    <name type="scientific">Sulfolobus spindle-shape virus 1</name>
    <name type="common">SSV1</name>
    <dbReference type="NCBI Taxonomy" id="244589"/>
    <lineage>
        <taxon>Viruses</taxon>
        <taxon>Viruses incertae sedis</taxon>
        <taxon>Fuselloviridae</taxon>
        <taxon>Alphafusellovirus</taxon>
    </lineage>
</organism>
<reference key="1">
    <citation type="journal article" date="1991" name="Virology">
        <title>Complete nucleotide sequence of the virus SSV1 of the archaebacterium Sulfolobus shibatae.</title>
        <authorList>
            <person name="Palm P."/>
            <person name="Schleper C."/>
            <person name="Grampp B."/>
            <person name="Yeats S."/>
            <person name="McWilliam P."/>
            <person name="Reiter W.-D."/>
            <person name="Zillig W."/>
        </authorList>
    </citation>
    <scope>NUCLEOTIDE SEQUENCE [GENOMIC DNA]</scope>
</reference>
<accession>P20218</accession>